<name>SNAPN_RAT</name>
<gene>
    <name type="primary">Snapin</name>
    <name type="synonym">Bloc1s7</name>
    <name type="synonym">Snap25bp</name>
    <name type="synonym">Snapap</name>
</gene>
<proteinExistence type="evidence at protein level"/>
<feature type="initiator methionine" description="Removed" evidence="2">
    <location>
        <position position="1"/>
    </location>
</feature>
<feature type="chain" id="PRO_0000097558" description="SNARE-associated protein Snapin">
    <location>
        <begin position="2"/>
        <end position="136"/>
    </location>
</feature>
<feature type="region of interest" description="Interaction with TOR1A" evidence="1">
    <location>
        <begin position="83"/>
        <end position="136"/>
    </location>
</feature>
<feature type="coiled-coil region" evidence="4">
    <location>
        <begin position="37"/>
        <end position="126"/>
    </location>
</feature>
<feature type="modified residue" description="N-acetylalanine" evidence="2">
    <location>
        <position position="2"/>
    </location>
</feature>
<feature type="modified residue" description="Phosphoserine" evidence="2">
    <location>
        <position position="10"/>
    </location>
</feature>
<feature type="modified residue" description="Phosphothreonine" evidence="2">
    <location>
        <position position="14"/>
    </location>
</feature>
<feature type="modified residue" description="Phosphoserine; by PKA" evidence="3">
    <location>
        <position position="50"/>
    </location>
</feature>
<feature type="modified residue" description="Phosphoserine" evidence="2">
    <location>
        <position position="126"/>
    </location>
</feature>
<feature type="modified residue" description="Phosphotyrosine" evidence="2">
    <location>
        <position position="129"/>
    </location>
</feature>
<feature type="modified residue" description="Phosphoserine" evidence="2">
    <location>
        <position position="133"/>
    </location>
</feature>
<keyword id="KW-0007">Acetylation</keyword>
<keyword id="KW-0175">Coiled coil</keyword>
<keyword id="KW-0963">Cytoplasm</keyword>
<keyword id="KW-0968">Cytoplasmic vesicle</keyword>
<keyword id="KW-0268">Exocytosis</keyword>
<keyword id="KW-0333">Golgi apparatus</keyword>
<keyword id="KW-0458">Lysosome</keyword>
<keyword id="KW-0472">Membrane</keyword>
<keyword id="KW-0597">Phosphoprotein</keyword>
<keyword id="KW-1185">Reference proteome</keyword>
<keyword id="KW-0770">Synapse</keyword>
<sequence length="136" mass="14904">MAAAGSAAVSGAGTPVAGPTGRDLFAEGLLEFLRPAVQQLDSHVHAVRESQVELREQIDNLATELCRINEDQKVALDLDPYVKKLLNARRRVVLVNNILQNAQERLRRLNHSVAKETARRRAMLDSGVYPPGSPSK</sequence>
<protein>
    <recommendedName>
        <fullName>SNARE-associated protein Snapin</fullName>
    </recommendedName>
    <alternativeName>
        <fullName>Biogenesis of lysosome-related organelles complex 1 subunit 7</fullName>
        <shortName>BLOC-1 subunit 7</shortName>
    </alternativeName>
    <alternativeName>
        <fullName>Synaptosomal-associated protein 25-binding protein</fullName>
        <shortName>SNAP-associated protein</shortName>
    </alternativeName>
</protein>
<reference key="1">
    <citation type="journal article" date="2004" name="Nature">
        <title>Genome sequence of the Brown Norway rat yields insights into mammalian evolution.</title>
        <authorList>
            <person name="Gibbs R.A."/>
            <person name="Weinstock G.M."/>
            <person name="Metzker M.L."/>
            <person name="Muzny D.M."/>
            <person name="Sodergren E.J."/>
            <person name="Scherer S."/>
            <person name="Scott G."/>
            <person name="Steffen D."/>
            <person name="Worley K.C."/>
            <person name="Burch P.E."/>
            <person name="Okwuonu G."/>
            <person name="Hines S."/>
            <person name="Lewis L."/>
            <person name="Deramo C."/>
            <person name="Delgado O."/>
            <person name="Dugan-Rocha S."/>
            <person name="Miner G."/>
            <person name="Morgan M."/>
            <person name="Hawes A."/>
            <person name="Gill R."/>
            <person name="Holt R.A."/>
            <person name="Adams M.D."/>
            <person name="Amanatides P.G."/>
            <person name="Baden-Tillson H."/>
            <person name="Barnstead M."/>
            <person name="Chin S."/>
            <person name="Evans C.A."/>
            <person name="Ferriera S."/>
            <person name="Fosler C."/>
            <person name="Glodek A."/>
            <person name="Gu Z."/>
            <person name="Jennings D."/>
            <person name="Kraft C.L."/>
            <person name="Nguyen T."/>
            <person name="Pfannkoch C.M."/>
            <person name="Sitter C."/>
            <person name="Sutton G.G."/>
            <person name="Venter J.C."/>
            <person name="Woodage T."/>
            <person name="Smith D."/>
            <person name="Lee H.-M."/>
            <person name="Gustafson E."/>
            <person name="Cahill P."/>
            <person name="Kana A."/>
            <person name="Doucette-Stamm L."/>
            <person name="Weinstock K."/>
            <person name="Fechtel K."/>
            <person name="Weiss R.B."/>
            <person name="Dunn D.M."/>
            <person name="Green E.D."/>
            <person name="Blakesley R.W."/>
            <person name="Bouffard G.G."/>
            <person name="De Jong P.J."/>
            <person name="Osoegawa K."/>
            <person name="Zhu B."/>
            <person name="Marra M."/>
            <person name="Schein J."/>
            <person name="Bosdet I."/>
            <person name="Fjell C."/>
            <person name="Jones S."/>
            <person name="Krzywinski M."/>
            <person name="Mathewson C."/>
            <person name="Siddiqui A."/>
            <person name="Wye N."/>
            <person name="McPherson J."/>
            <person name="Zhao S."/>
            <person name="Fraser C.M."/>
            <person name="Shetty J."/>
            <person name="Shatsman S."/>
            <person name="Geer K."/>
            <person name="Chen Y."/>
            <person name="Abramzon S."/>
            <person name="Nierman W.C."/>
            <person name="Havlak P.H."/>
            <person name="Chen R."/>
            <person name="Durbin K.J."/>
            <person name="Egan A."/>
            <person name="Ren Y."/>
            <person name="Song X.-Z."/>
            <person name="Li B."/>
            <person name="Liu Y."/>
            <person name="Qin X."/>
            <person name="Cawley S."/>
            <person name="Cooney A.J."/>
            <person name="D'Souza L.M."/>
            <person name="Martin K."/>
            <person name="Wu J.Q."/>
            <person name="Gonzalez-Garay M.L."/>
            <person name="Jackson A.R."/>
            <person name="Kalafus K.J."/>
            <person name="McLeod M.P."/>
            <person name="Milosavljevic A."/>
            <person name="Virk D."/>
            <person name="Volkov A."/>
            <person name="Wheeler D.A."/>
            <person name="Zhang Z."/>
            <person name="Bailey J.A."/>
            <person name="Eichler E.E."/>
            <person name="Tuzun E."/>
            <person name="Birney E."/>
            <person name="Mongin E."/>
            <person name="Ureta-Vidal A."/>
            <person name="Woodwark C."/>
            <person name="Zdobnov E."/>
            <person name="Bork P."/>
            <person name="Suyama M."/>
            <person name="Torrents D."/>
            <person name="Alexandersson M."/>
            <person name="Trask B.J."/>
            <person name="Young J.M."/>
            <person name="Huang H."/>
            <person name="Wang H."/>
            <person name="Xing H."/>
            <person name="Daniels S."/>
            <person name="Gietzen D."/>
            <person name="Schmidt J."/>
            <person name="Stevens K."/>
            <person name="Vitt U."/>
            <person name="Wingrove J."/>
            <person name="Camara F."/>
            <person name="Mar Alba M."/>
            <person name="Abril J.F."/>
            <person name="Guigo R."/>
            <person name="Smit A."/>
            <person name="Dubchak I."/>
            <person name="Rubin E.M."/>
            <person name="Couronne O."/>
            <person name="Poliakov A."/>
            <person name="Huebner N."/>
            <person name="Ganten D."/>
            <person name="Goesele C."/>
            <person name="Hummel O."/>
            <person name="Kreitler T."/>
            <person name="Lee Y.-A."/>
            <person name="Monti J."/>
            <person name="Schulz H."/>
            <person name="Zimdahl H."/>
            <person name="Himmelbauer H."/>
            <person name="Lehrach H."/>
            <person name="Jacob H.J."/>
            <person name="Bromberg S."/>
            <person name="Gullings-Handley J."/>
            <person name="Jensen-Seaman M.I."/>
            <person name="Kwitek A.E."/>
            <person name="Lazar J."/>
            <person name="Pasko D."/>
            <person name="Tonellato P.J."/>
            <person name="Twigger S."/>
            <person name="Ponting C.P."/>
            <person name="Duarte J.M."/>
            <person name="Rice S."/>
            <person name="Goodstadt L."/>
            <person name="Beatson S.A."/>
            <person name="Emes R.D."/>
            <person name="Winter E.E."/>
            <person name="Webber C."/>
            <person name="Brandt P."/>
            <person name="Nyakatura G."/>
            <person name="Adetobi M."/>
            <person name="Chiaromonte F."/>
            <person name="Elnitski L."/>
            <person name="Eswara P."/>
            <person name="Hardison R.C."/>
            <person name="Hou M."/>
            <person name="Kolbe D."/>
            <person name="Makova K."/>
            <person name="Miller W."/>
            <person name="Nekrutenko A."/>
            <person name="Riemer C."/>
            <person name="Schwartz S."/>
            <person name="Taylor J."/>
            <person name="Yang S."/>
            <person name="Zhang Y."/>
            <person name="Lindpaintner K."/>
            <person name="Andrews T.D."/>
            <person name="Caccamo M."/>
            <person name="Clamp M."/>
            <person name="Clarke L."/>
            <person name="Curwen V."/>
            <person name="Durbin R.M."/>
            <person name="Eyras E."/>
            <person name="Searle S.M."/>
            <person name="Cooper G.M."/>
            <person name="Batzoglou S."/>
            <person name="Brudno M."/>
            <person name="Sidow A."/>
            <person name="Stone E.A."/>
            <person name="Payseur B.A."/>
            <person name="Bourque G."/>
            <person name="Lopez-Otin C."/>
            <person name="Puente X.S."/>
            <person name="Chakrabarti K."/>
            <person name="Chatterji S."/>
            <person name="Dewey C."/>
            <person name="Pachter L."/>
            <person name="Bray N."/>
            <person name="Yap V.B."/>
            <person name="Caspi A."/>
            <person name="Tesler G."/>
            <person name="Pevzner P.A."/>
            <person name="Haussler D."/>
            <person name="Roskin K.M."/>
            <person name="Baertsch R."/>
            <person name="Clawson H."/>
            <person name="Furey T.S."/>
            <person name="Hinrichs A.S."/>
            <person name="Karolchik D."/>
            <person name="Kent W.J."/>
            <person name="Rosenbloom K.R."/>
            <person name="Trumbower H."/>
            <person name="Weirauch M."/>
            <person name="Cooper D.N."/>
            <person name="Stenson P.D."/>
            <person name="Ma B."/>
            <person name="Brent M."/>
            <person name="Arumugam M."/>
            <person name="Shteynberg D."/>
            <person name="Copley R.R."/>
            <person name="Taylor M.S."/>
            <person name="Riethman H."/>
            <person name="Mudunuri U."/>
            <person name="Peterson J."/>
            <person name="Guyer M."/>
            <person name="Felsenfeld A."/>
            <person name="Old S."/>
            <person name="Mockrin S."/>
            <person name="Collins F.S."/>
        </authorList>
    </citation>
    <scope>NUCLEOTIDE SEQUENCE [LARGE SCALE GENOMIC DNA]</scope>
    <source>
        <strain>Brown Norway</strain>
    </source>
</reference>
<reference key="2">
    <citation type="journal article" date="1999" name="Nat. Neurosci.">
        <title>Snapin: a SNARE-associated protein implicated in synaptic transmission.</title>
        <authorList>
            <person name="Ilardi J.M."/>
            <person name="Mochida S."/>
            <person name="Sheng Z.-H."/>
        </authorList>
    </citation>
    <scope>FUNCTION</scope>
    <scope>TISSUE SPECIFICITY</scope>
    <source>
        <tissue>Brain</tissue>
    </source>
</reference>
<reference key="3">
    <citation type="journal article" date="2001" name="Nat. Cell Biol.">
        <title>Phosphorylation of Snapin by PKA modulates its interaction with the SNARE complex.</title>
        <authorList>
            <person name="Chheda M.G."/>
            <person name="Ashery U."/>
            <person name="Thakur P."/>
            <person name="Rettig J."/>
            <person name="Sheng Z.-H."/>
        </authorList>
    </citation>
    <scope>FUNCTION</scope>
    <scope>PHOSPHORYLATION</scope>
</reference>
<reference key="4">
    <citation type="journal article" date="2003" name="Biochem. J.">
        <title>Identification and characterization of Snapin as a ubiquitously expressed SNARE-binding protein that interacts with SNAP23 in non-neuronal cells.</title>
        <authorList>
            <person name="Buxton P."/>
            <person name="Zhang X.-M."/>
            <person name="Walsh B."/>
            <person name="Sriratana A."/>
            <person name="Schenberg I."/>
            <person name="Manickam E."/>
            <person name="Rowe T."/>
        </authorList>
    </citation>
    <scope>TISSUE SPECIFICITY</scope>
</reference>
<reference key="5">
    <citation type="journal article" date="2006" name="Mol. Biol. Cell">
        <title>BLOC-1 complex deficiency alters the targeting of adaptor protein complex-3 cargoes.</title>
        <authorList>
            <person name="Salazar G."/>
            <person name="Craige B."/>
            <person name="Styers M.L."/>
            <person name="Newell-Litwa K.A."/>
            <person name="Doucette M.M."/>
            <person name="Wainer B.H."/>
            <person name="Falcon-Perez J.M."/>
            <person name="Dell'Angelica E.C."/>
            <person name="Peden A.A."/>
            <person name="Werner E."/>
            <person name="Faundez V."/>
        </authorList>
    </citation>
    <scope>IDENTIFICATION IN THE BLOC-1 COMPLEX</scope>
    <scope>IDENTIFICATION BY MASS SPECTROMETRY</scope>
</reference>
<reference key="6">
    <citation type="journal article" date="2008" name="J. Biol. Chem.">
        <title>The dystonia-associated protein torsinA modulates synaptic vesicle recycling.</title>
        <authorList>
            <person name="Granata A."/>
            <person name="Watson R."/>
            <person name="Collinson L.M."/>
            <person name="Schiavo G."/>
            <person name="Warner T.T."/>
        </authorList>
    </citation>
    <scope>SUBCELLULAR LOCATION</scope>
</reference>
<evidence type="ECO:0000250" key="1"/>
<evidence type="ECO:0000250" key="2">
    <source>
        <dbReference type="UniProtKB" id="O95295"/>
    </source>
</evidence>
<evidence type="ECO:0000250" key="3">
    <source>
        <dbReference type="UniProtKB" id="Q9Z266"/>
    </source>
</evidence>
<evidence type="ECO:0000255" key="4"/>
<evidence type="ECO:0000269" key="5">
    <source>
    </source>
</evidence>
<evidence type="ECO:0000269" key="6">
    <source>
    </source>
</evidence>
<evidence type="ECO:0000269" key="7">
    <source>
    </source>
</evidence>
<evidence type="ECO:0000269" key="8">
    <source>
    </source>
</evidence>
<evidence type="ECO:0000269" key="9">
    <source>
    </source>
</evidence>
<evidence type="ECO:0000305" key="10"/>
<dbReference type="EMBL" id="AABR03012141">
    <property type="status" value="NOT_ANNOTATED_CDS"/>
    <property type="molecule type" value="Genomic_DNA"/>
</dbReference>
<dbReference type="EMBL" id="CB613900">
    <property type="status" value="NOT_ANNOTATED_CDS"/>
    <property type="molecule type" value="mRNA"/>
</dbReference>
<dbReference type="RefSeq" id="NP_001164047.1">
    <property type="nucleotide sequence ID" value="NM_001170576.2"/>
</dbReference>
<dbReference type="SMR" id="P60192"/>
<dbReference type="BioGRID" id="254916">
    <property type="interactions" value="1"/>
</dbReference>
<dbReference type="ELM" id="P60192"/>
<dbReference type="FunCoup" id="P60192">
    <property type="interactions" value="1818"/>
</dbReference>
<dbReference type="IntAct" id="P60192">
    <property type="interactions" value="7"/>
</dbReference>
<dbReference type="MINT" id="P60192"/>
<dbReference type="STRING" id="10116.ENSRNOP00000018830"/>
<dbReference type="iPTMnet" id="P60192"/>
<dbReference type="PhosphoSitePlus" id="P60192"/>
<dbReference type="PaxDb" id="10116-ENSRNOP00000018830"/>
<dbReference type="ABCD" id="P60192">
    <property type="antibodies" value="1 sequenced antibody"/>
</dbReference>
<dbReference type="GeneID" id="295217"/>
<dbReference type="KEGG" id="rno:295217"/>
<dbReference type="UCSC" id="RGD:1560377">
    <property type="organism name" value="rat"/>
</dbReference>
<dbReference type="AGR" id="RGD:1560377"/>
<dbReference type="CTD" id="23557"/>
<dbReference type="RGD" id="1560377">
    <property type="gene designation" value="Snapin"/>
</dbReference>
<dbReference type="VEuPathDB" id="HostDB:ENSRNOG00000013356"/>
<dbReference type="eggNOG" id="ENOG502S07W">
    <property type="taxonomic scope" value="Eukaryota"/>
</dbReference>
<dbReference type="HOGENOM" id="CLU_124640_1_0_1"/>
<dbReference type="InParanoid" id="P60192"/>
<dbReference type="OrthoDB" id="64046at9989"/>
<dbReference type="PhylomeDB" id="P60192"/>
<dbReference type="TreeFam" id="TF319577"/>
<dbReference type="Reactome" id="R-RNO-432722">
    <property type="pathway name" value="Golgi Associated Vesicle Biogenesis"/>
</dbReference>
<dbReference type="PRO" id="PR:P60192"/>
<dbReference type="Proteomes" id="UP000002494">
    <property type="component" value="Chromosome 2"/>
</dbReference>
<dbReference type="Bgee" id="ENSRNOG00000013356">
    <property type="expression patterns" value="Expressed in ovary and 20 other cell types or tissues"/>
</dbReference>
<dbReference type="GO" id="GO:0001669">
    <property type="term" value="C:acrosomal vesicle"/>
    <property type="evidence" value="ECO:0000266"/>
    <property type="project" value="RGD"/>
</dbReference>
<dbReference type="GO" id="GO:1904115">
    <property type="term" value="C:axon cytoplasm"/>
    <property type="evidence" value="ECO:0007669"/>
    <property type="project" value="GOC"/>
</dbReference>
<dbReference type="GO" id="GO:0031083">
    <property type="term" value="C:BLOC-1 complex"/>
    <property type="evidence" value="ECO:0000250"/>
    <property type="project" value="UniProtKB"/>
</dbReference>
<dbReference type="GO" id="GO:0099078">
    <property type="term" value="C:BORC complex"/>
    <property type="evidence" value="ECO:0000250"/>
    <property type="project" value="UniProtKB"/>
</dbReference>
<dbReference type="GO" id="GO:0031410">
    <property type="term" value="C:cytoplasmic vesicle"/>
    <property type="evidence" value="ECO:0000266"/>
    <property type="project" value="RGD"/>
</dbReference>
<dbReference type="GO" id="GO:0005829">
    <property type="term" value="C:cytosol"/>
    <property type="evidence" value="ECO:0000266"/>
    <property type="project" value="RGD"/>
</dbReference>
<dbReference type="GO" id="GO:0098978">
    <property type="term" value="C:glutamatergic synapse"/>
    <property type="evidence" value="ECO:0000314"/>
    <property type="project" value="SynGO"/>
</dbReference>
<dbReference type="GO" id="GO:0000139">
    <property type="term" value="C:Golgi membrane"/>
    <property type="evidence" value="ECO:0007669"/>
    <property type="project" value="UniProtKB-SubCell"/>
</dbReference>
<dbReference type="GO" id="GO:0005765">
    <property type="term" value="C:lysosomal membrane"/>
    <property type="evidence" value="ECO:0007669"/>
    <property type="project" value="UniProtKB-SubCell"/>
</dbReference>
<dbReference type="GO" id="GO:0002177">
    <property type="term" value="C:manchette"/>
    <property type="evidence" value="ECO:0000266"/>
    <property type="project" value="RGD"/>
</dbReference>
<dbReference type="GO" id="GO:1990742">
    <property type="term" value="C:microvesicle"/>
    <property type="evidence" value="ECO:0000266"/>
    <property type="project" value="RGD"/>
</dbReference>
<dbReference type="GO" id="GO:0048471">
    <property type="term" value="C:perinuclear region of cytoplasm"/>
    <property type="evidence" value="ECO:0000250"/>
    <property type="project" value="UniProtKB"/>
</dbReference>
<dbReference type="GO" id="GO:0098793">
    <property type="term" value="C:presynapse"/>
    <property type="evidence" value="ECO:0000314"/>
    <property type="project" value="SynGO"/>
</dbReference>
<dbReference type="GO" id="GO:0030141">
    <property type="term" value="C:secretory granule"/>
    <property type="evidence" value="ECO:0000314"/>
    <property type="project" value="UniProtKB"/>
</dbReference>
<dbReference type="GO" id="GO:0045202">
    <property type="term" value="C:synapse"/>
    <property type="evidence" value="ECO:0000266"/>
    <property type="project" value="RGD"/>
</dbReference>
<dbReference type="GO" id="GO:0008021">
    <property type="term" value="C:synaptic vesicle"/>
    <property type="evidence" value="ECO:0000314"/>
    <property type="project" value="SynGO"/>
</dbReference>
<dbReference type="GO" id="GO:0030672">
    <property type="term" value="C:synaptic vesicle membrane"/>
    <property type="evidence" value="ECO:0007669"/>
    <property type="project" value="UniProtKB-SubCell"/>
</dbReference>
<dbReference type="GO" id="GO:0000149">
    <property type="term" value="F:SNARE binding"/>
    <property type="evidence" value="ECO:0000266"/>
    <property type="project" value="RGD"/>
</dbReference>
<dbReference type="GO" id="GO:0008089">
    <property type="term" value="P:anterograde axonal transport"/>
    <property type="evidence" value="ECO:0000250"/>
    <property type="project" value="UniProtKB"/>
</dbReference>
<dbReference type="GO" id="GO:0048490">
    <property type="term" value="P:anterograde synaptic vesicle transport"/>
    <property type="evidence" value="ECO:0000250"/>
    <property type="project" value="UniProtKB"/>
</dbReference>
<dbReference type="GO" id="GO:0097352">
    <property type="term" value="P:autophagosome maturation"/>
    <property type="evidence" value="ECO:0000266"/>
    <property type="project" value="RGD"/>
</dbReference>
<dbReference type="GO" id="GO:0007268">
    <property type="term" value="P:chemical synaptic transmission"/>
    <property type="evidence" value="ECO:0000266"/>
    <property type="project" value="RGD"/>
</dbReference>
<dbReference type="GO" id="GO:0008333">
    <property type="term" value="P:endosome to lysosome transport"/>
    <property type="evidence" value="ECO:0000266"/>
    <property type="project" value="RGD"/>
</dbReference>
<dbReference type="GO" id="GO:0051650">
    <property type="term" value="P:establishment of vesicle localization"/>
    <property type="evidence" value="ECO:0000266"/>
    <property type="project" value="RGD"/>
</dbReference>
<dbReference type="GO" id="GO:0006886">
    <property type="term" value="P:intracellular protein transport"/>
    <property type="evidence" value="ECO:0007669"/>
    <property type="project" value="InterPro"/>
</dbReference>
<dbReference type="GO" id="GO:1902774">
    <property type="term" value="P:late endosome to lysosome transport"/>
    <property type="evidence" value="ECO:0000266"/>
    <property type="project" value="RGD"/>
</dbReference>
<dbReference type="GO" id="GO:0007042">
    <property type="term" value="P:lysosomal lumen acidification"/>
    <property type="evidence" value="ECO:0000266"/>
    <property type="project" value="RGD"/>
</dbReference>
<dbReference type="GO" id="GO:0032418">
    <property type="term" value="P:lysosome localization"/>
    <property type="evidence" value="ECO:0000250"/>
    <property type="project" value="UniProtKB"/>
</dbReference>
<dbReference type="GO" id="GO:0007040">
    <property type="term" value="P:lysosome organization"/>
    <property type="evidence" value="ECO:0000266"/>
    <property type="project" value="RGD"/>
</dbReference>
<dbReference type="GO" id="GO:0010977">
    <property type="term" value="P:negative regulation of neuron projection development"/>
    <property type="evidence" value="ECO:0000266"/>
    <property type="project" value="RGD"/>
</dbReference>
<dbReference type="GO" id="GO:0070050">
    <property type="term" value="P:neuron cellular homeostasis"/>
    <property type="evidence" value="ECO:0000266"/>
    <property type="project" value="RGD"/>
</dbReference>
<dbReference type="GO" id="GO:0031175">
    <property type="term" value="P:neuron projection development"/>
    <property type="evidence" value="ECO:0000250"/>
    <property type="project" value="UniProtKB"/>
</dbReference>
<dbReference type="GO" id="GO:0051604">
    <property type="term" value="P:protein maturation"/>
    <property type="evidence" value="ECO:0000266"/>
    <property type="project" value="RGD"/>
</dbReference>
<dbReference type="GO" id="GO:0031503">
    <property type="term" value="P:protein-containing complex localization"/>
    <property type="evidence" value="ECO:0000266"/>
    <property type="project" value="RGD"/>
</dbReference>
<dbReference type="GO" id="GO:2000300">
    <property type="term" value="P:regulation of synaptic vesicle exocytosis"/>
    <property type="evidence" value="ECO:0000266"/>
    <property type="project" value="RGD"/>
</dbReference>
<dbReference type="GO" id="GO:0008090">
    <property type="term" value="P:retrograde axonal transport"/>
    <property type="evidence" value="ECO:0000266"/>
    <property type="project" value="RGD"/>
</dbReference>
<dbReference type="GO" id="GO:0016079">
    <property type="term" value="P:synaptic vesicle exocytosis"/>
    <property type="evidence" value="ECO:0000266"/>
    <property type="project" value="RGD"/>
</dbReference>
<dbReference type="GO" id="GO:0031629">
    <property type="term" value="P:synaptic vesicle fusion to presynaptic active zone membrane"/>
    <property type="evidence" value="ECO:0000266"/>
    <property type="project" value="RGD"/>
</dbReference>
<dbReference type="GO" id="GO:0016188">
    <property type="term" value="P:synaptic vesicle maturation"/>
    <property type="evidence" value="ECO:0000266"/>
    <property type="project" value="RGD"/>
</dbReference>
<dbReference type="GO" id="GO:0048489">
    <property type="term" value="P:synaptic vesicle transport"/>
    <property type="evidence" value="ECO:0000250"/>
    <property type="project" value="UniProtKB"/>
</dbReference>
<dbReference type="GO" id="GO:0072553">
    <property type="term" value="P:terminal button organization"/>
    <property type="evidence" value="ECO:0000266"/>
    <property type="project" value="RGD"/>
</dbReference>
<dbReference type="InterPro" id="IPR017246">
    <property type="entry name" value="Snapin"/>
</dbReference>
<dbReference type="InterPro" id="IPR028119">
    <property type="entry name" value="Snapin/Pallidin/Snn1"/>
</dbReference>
<dbReference type="PANTHER" id="PTHR31305">
    <property type="entry name" value="SNARE-ASSOCIATED PROTEIN SNAPIN"/>
    <property type="match status" value="1"/>
</dbReference>
<dbReference type="PANTHER" id="PTHR31305:SF2">
    <property type="entry name" value="SNARE-ASSOCIATED PROTEIN SNAPIN"/>
    <property type="match status" value="1"/>
</dbReference>
<dbReference type="Pfam" id="PF14712">
    <property type="entry name" value="Snapin_Pallidin"/>
    <property type="match status" value="1"/>
</dbReference>
<dbReference type="PIRSF" id="PIRSF037631">
    <property type="entry name" value="Snapin"/>
    <property type="match status" value="1"/>
</dbReference>
<organism>
    <name type="scientific">Rattus norvegicus</name>
    <name type="common">Rat</name>
    <dbReference type="NCBI Taxonomy" id="10116"/>
    <lineage>
        <taxon>Eukaryota</taxon>
        <taxon>Metazoa</taxon>
        <taxon>Chordata</taxon>
        <taxon>Craniata</taxon>
        <taxon>Vertebrata</taxon>
        <taxon>Euteleostomi</taxon>
        <taxon>Mammalia</taxon>
        <taxon>Eutheria</taxon>
        <taxon>Euarchontoglires</taxon>
        <taxon>Glires</taxon>
        <taxon>Rodentia</taxon>
        <taxon>Myomorpha</taxon>
        <taxon>Muroidea</taxon>
        <taxon>Muridae</taxon>
        <taxon>Murinae</taxon>
        <taxon>Rattus</taxon>
    </lineage>
</organism>
<accession>P60192</accession>
<comment type="function">
    <text evidence="2 5 6">Component of the BLOC-1 complex, a complex that is required for normal biogenesis of lysosome-related organelles (LRO), such as platelet dense granules and melanosomes. In concert with the AP-3 complex, the BLOC-1 complex is required to target membrane protein cargos into vesicles assembled at cell bodies for delivery into neurites and nerve terminals. The BLOC-1 complex, in association with SNARE proteins, is also proposed to be involved in neurite extension. Plays a role in intracellular vesicle trafficking and synaptic vesicle recycling. May modulate a step between vesicle priming, fusion and calcium-dependent neurotransmitter release through its ability to potentiate the interaction of synaptotagmin with the SNAREs and the plasma-membrane-associated protein SNAP25. Its phosphorylation state influences exocytotic protein interactions and may regulate synaptic vesicle exocytosis. May also have a role in the mechanisms of SNARE-mediated membrane fusion in non-neuronal cells (PubMed:10195194, PubMed:11283605). As part of the BORC complex may play a role in lysosomes movement and localization at the cell periphery. Associated with the cytosolic face of lysosomes, the BORC complex may recruit ARL8B and couple lysosomes to microtubule plus-end-directed kinesin motor (By similarity).</text>
</comment>
<comment type="subunit">
    <text evidence="2 3 8">Component of the biogenesis of lysosome-related organelles complex 1 (BLOC-1) composed of BLOC1S1, BLOC1S2, BLOC1S3, BLOC1S4, BLOC1S5, BLOC1S6, DTNBP1/BLOC1S7 and SNAPIN/BLOC1S8. Octamer composed of one copy each BLOC1S1, BLOC1S2, BLOC1S3, BLOC1S4, BLOC1S5, BLOC1S6, DTNBP1/BLOC1S7 and SNAPIN/BLOC1S8. The BLOC-1 complex associates with the AP-3 protein complex and membrane protein cargos (PubMed:16760431). Component of the BLOC-one-related complex (BORC) which is composed of BLOC1S1, BLOC1S2, BORCS5, BORCS6, BORCS7, BORCS8, KXD1 and SNAPIN (By similarity). Associates with the SNARE complex. Interacts with CSNK1D, SNAP23 and STX4A but not with STX1A, VAMP2 and SYT1. Interacts with SNAP25; the interaction with SNAP25 is increased by its phosphorylation (By similarity). Interacts with CNTRL, NANOS1, PUM2 and RGS7. Interacts with TOR1A; the interaction is direct and associates SNAPIN with the CSN complex (By similarity).</text>
</comment>
<comment type="subcellular location">
    <subcellularLocation>
        <location evidence="3">Membrane</location>
        <topology evidence="3">Peripheral membrane protein</topology>
        <orientation evidence="3">Cytoplasmic side</orientation>
    </subcellularLocation>
    <subcellularLocation>
        <location evidence="3">Cytoplasm</location>
        <location evidence="3">Cytosol</location>
    </subcellularLocation>
    <subcellularLocation>
        <location evidence="3">Cytoplasm</location>
        <location evidence="3">Perinuclear region</location>
    </subcellularLocation>
    <subcellularLocation>
        <location evidence="3">Golgi apparatus membrane</location>
    </subcellularLocation>
    <subcellularLocation>
        <location evidence="2">Lysosome membrane</location>
    </subcellularLocation>
    <subcellularLocation>
        <location evidence="9">Cytoplasmic vesicle</location>
        <location evidence="9">Secretory vesicle</location>
        <location evidence="9">Synaptic vesicle membrane</location>
    </subcellularLocation>
    <text evidence="2">Colocalizes with NANOS1 and PUM2 in the perinuclear region of germ cells.</text>
</comment>
<comment type="tissue specificity">
    <text evidence="5 7">Strongly expressed in testis, spleen, kidney, liver and brain; lower expression in heart, fat and skeletal muscle.</text>
</comment>
<comment type="PTM">
    <text evidence="6">Phosphorylated by CSNK1D/CK1.</text>
</comment>
<comment type="similarity">
    <text evidence="10">Belongs to the SNAPIN family.</text>
</comment>